<proteinExistence type="inferred from homology"/>
<organism>
    <name type="scientific">Prochlorococcus marinus (strain MIT 9515)</name>
    <dbReference type="NCBI Taxonomy" id="167542"/>
    <lineage>
        <taxon>Bacteria</taxon>
        <taxon>Bacillati</taxon>
        <taxon>Cyanobacteriota</taxon>
        <taxon>Cyanophyceae</taxon>
        <taxon>Synechococcales</taxon>
        <taxon>Prochlorococcaceae</taxon>
        <taxon>Prochlorococcus</taxon>
    </lineage>
</organism>
<sequence>MDDSLRVSILSEALPYIQSFSGRKIVVKYGGSIMEDEKLKKAFFRDIALLSSVGVCPVVIHGGGPEINRWLSKLEISPKFEKGLRVTDDKTMEIVEMVLMGRVNKQIVRGINKTGSLAVGISGLDGNLIQSRELGDGSHGLVGEVTQINPELLEPLIAKGYIPVISSIGSTTDGISHNINADFVAGELAAAINAEKLILLTDTPGILKERNNPNSLAKQINLKEARKFIEKNIVSNGMLPKTECCIRALAQGVRAAHIIDGRIEHSLLLEIFTNSGIGTMINA</sequence>
<reference key="1">
    <citation type="journal article" date="2007" name="PLoS Genet.">
        <title>Patterns and implications of gene gain and loss in the evolution of Prochlorococcus.</title>
        <authorList>
            <person name="Kettler G.C."/>
            <person name="Martiny A.C."/>
            <person name="Huang K."/>
            <person name="Zucker J."/>
            <person name="Coleman M.L."/>
            <person name="Rodrigue S."/>
            <person name="Chen F."/>
            <person name="Lapidus A."/>
            <person name="Ferriera S."/>
            <person name="Johnson J."/>
            <person name="Steglich C."/>
            <person name="Church G.M."/>
            <person name="Richardson P."/>
            <person name="Chisholm S.W."/>
        </authorList>
    </citation>
    <scope>NUCLEOTIDE SEQUENCE [LARGE SCALE GENOMIC DNA]</scope>
    <source>
        <strain>MIT 9515</strain>
    </source>
</reference>
<protein>
    <recommendedName>
        <fullName evidence="1">Acetylglutamate kinase</fullName>
        <ecNumber evidence="1">2.7.2.8</ecNumber>
    </recommendedName>
    <alternativeName>
        <fullName evidence="1">N-acetyl-L-glutamate 5-phosphotransferase</fullName>
    </alternativeName>
    <alternativeName>
        <fullName evidence="1">NAG kinase</fullName>
        <shortName evidence="1">NAGK</shortName>
    </alternativeName>
</protein>
<feature type="chain" id="PRO_0000335654" description="Acetylglutamate kinase">
    <location>
        <begin position="1"/>
        <end position="283"/>
    </location>
</feature>
<feature type="binding site" evidence="1">
    <location>
        <begin position="63"/>
        <end position="64"/>
    </location>
    <ligand>
        <name>substrate</name>
    </ligand>
</feature>
<feature type="binding site" evidence="1">
    <location>
        <position position="85"/>
    </location>
    <ligand>
        <name>substrate</name>
    </ligand>
</feature>
<feature type="binding site" evidence="1">
    <location>
        <position position="178"/>
    </location>
    <ligand>
        <name>substrate</name>
    </ligand>
</feature>
<feature type="site" description="Transition state stabilizer" evidence="1">
    <location>
        <position position="28"/>
    </location>
</feature>
<feature type="site" description="Transition state stabilizer" evidence="1">
    <location>
        <position position="241"/>
    </location>
</feature>
<keyword id="KW-0028">Amino-acid biosynthesis</keyword>
<keyword id="KW-0055">Arginine biosynthesis</keyword>
<keyword id="KW-0067">ATP-binding</keyword>
<keyword id="KW-0963">Cytoplasm</keyword>
<keyword id="KW-0418">Kinase</keyword>
<keyword id="KW-0547">Nucleotide-binding</keyword>
<keyword id="KW-0808">Transferase</keyword>
<accession>A2BVG1</accession>
<name>ARGB_PROM5</name>
<evidence type="ECO:0000255" key="1">
    <source>
        <dbReference type="HAMAP-Rule" id="MF_00082"/>
    </source>
</evidence>
<gene>
    <name evidence="1" type="primary">argB</name>
    <name type="ordered locus">P9515_05631</name>
</gene>
<dbReference type="EC" id="2.7.2.8" evidence="1"/>
<dbReference type="EMBL" id="CP000552">
    <property type="protein sequence ID" value="ABM71772.1"/>
    <property type="molecule type" value="Genomic_DNA"/>
</dbReference>
<dbReference type="RefSeq" id="WP_011819879.1">
    <property type="nucleotide sequence ID" value="NC_008817.1"/>
</dbReference>
<dbReference type="SMR" id="A2BVG1"/>
<dbReference type="STRING" id="167542.P9515_05631"/>
<dbReference type="GeneID" id="60201094"/>
<dbReference type="KEGG" id="pmc:P9515_05631"/>
<dbReference type="eggNOG" id="COG0548">
    <property type="taxonomic scope" value="Bacteria"/>
</dbReference>
<dbReference type="HOGENOM" id="CLU_053680_0_0_3"/>
<dbReference type="OrthoDB" id="9803155at2"/>
<dbReference type="UniPathway" id="UPA00068">
    <property type="reaction ID" value="UER00107"/>
</dbReference>
<dbReference type="Proteomes" id="UP000001589">
    <property type="component" value="Chromosome"/>
</dbReference>
<dbReference type="GO" id="GO:0005737">
    <property type="term" value="C:cytoplasm"/>
    <property type="evidence" value="ECO:0007669"/>
    <property type="project" value="UniProtKB-SubCell"/>
</dbReference>
<dbReference type="GO" id="GO:0003991">
    <property type="term" value="F:acetylglutamate kinase activity"/>
    <property type="evidence" value="ECO:0007669"/>
    <property type="project" value="UniProtKB-UniRule"/>
</dbReference>
<dbReference type="GO" id="GO:0005524">
    <property type="term" value="F:ATP binding"/>
    <property type="evidence" value="ECO:0007669"/>
    <property type="project" value="UniProtKB-UniRule"/>
</dbReference>
<dbReference type="GO" id="GO:0042450">
    <property type="term" value="P:arginine biosynthetic process via ornithine"/>
    <property type="evidence" value="ECO:0007669"/>
    <property type="project" value="UniProtKB-UniRule"/>
</dbReference>
<dbReference type="GO" id="GO:0006526">
    <property type="term" value="P:L-arginine biosynthetic process"/>
    <property type="evidence" value="ECO:0007669"/>
    <property type="project" value="UniProtKB-UniPathway"/>
</dbReference>
<dbReference type="CDD" id="cd04250">
    <property type="entry name" value="AAK_NAGK-C"/>
    <property type="match status" value="1"/>
</dbReference>
<dbReference type="FunFam" id="3.40.1160.10:FF:000004">
    <property type="entry name" value="Acetylglutamate kinase"/>
    <property type="match status" value="1"/>
</dbReference>
<dbReference type="Gene3D" id="3.40.1160.10">
    <property type="entry name" value="Acetylglutamate kinase-like"/>
    <property type="match status" value="1"/>
</dbReference>
<dbReference type="HAMAP" id="MF_00082">
    <property type="entry name" value="ArgB"/>
    <property type="match status" value="1"/>
</dbReference>
<dbReference type="InterPro" id="IPR036393">
    <property type="entry name" value="AceGlu_kinase-like_sf"/>
</dbReference>
<dbReference type="InterPro" id="IPR004662">
    <property type="entry name" value="AcgluKinase_fam"/>
</dbReference>
<dbReference type="InterPro" id="IPR037528">
    <property type="entry name" value="ArgB"/>
</dbReference>
<dbReference type="InterPro" id="IPR001048">
    <property type="entry name" value="Asp/Glu/Uridylate_kinase"/>
</dbReference>
<dbReference type="InterPro" id="IPR041727">
    <property type="entry name" value="NAGK-C"/>
</dbReference>
<dbReference type="NCBIfam" id="TIGR00761">
    <property type="entry name" value="argB"/>
    <property type="match status" value="1"/>
</dbReference>
<dbReference type="PANTHER" id="PTHR23342">
    <property type="entry name" value="N-ACETYLGLUTAMATE SYNTHASE"/>
    <property type="match status" value="1"/>
</dbReference>
<dbReference type="PANTHER" id="PTHR23342:SF0">
    <property type="entry name" value="N-ACETYLGLUTAMATE SYNTHASE, MITOCHONDRIAL"/>
    <property type="match status" value="1"/>
</dbReference>
<dbReference type="Pfam" id="PF00696">
    <property type="entry name" value="AA_kinase"/>
    <property type="match status" value="1"/>
</dbReference>
<dbReference type="PIRSF" id="PIRSF000728">
    <property type="entry name" value="NAGK"/>
    <property type="match status" value="1"/>
</dbReference>
<dbReference type="SUPFAM" id="SSF53633">
    <property type="entry name" value="Carbamate kinase-like"/>
    <property type="match status" value="1"/>
</dbReference>
<comment type="function">
    <text evidence="1">Catalyzes the ATP-dependent phosphorylation of N-acetyl-L-glutamate.</text>
</comment>
<comment type="catalytic activity">
    <reaction evidence="1">
        <text>N-acetyl-L-glutamate + ATP = N-acetyl-L-glutamyl 5-phosphate + ADP</text>
        <dbReference type="Rhea" id="RHEA:14629"/>
        <dbReference type="ChEBI" id="CHEBI:30616"/>
        <dbReference type="ChEBI" id="CHEBI:44337"/>
        <dbReference type="ChEBI" id="CHEBI:57936"/>
        <dbReference type="ChEBI" id="CHEBI:456216"/>
        <dbReference type="EC" id="2.7.2.8"/>
    </reaction>
</comment>
<comment type="pathway">
    <text evidence="1">Amino-acid biosynthesis; L-arginine biosynthesis; N(2)-acetyl-L-ornithine from L-glutamate: step 2/4.</text>
</comment>
<comment type="subcellular location">
    <subcellularLocation>
        <location evidence="1">Cytoplasm</location>
    </subcellularLocation>
</comment>
<comment type="similarity">
    <text evidence="1">Belongs to the acetylglutamate kinase family. ArgB subfamily.</text>
</comment>